<feature type="chain" id="PRO_1000136290" description="UPF0231 protein YacL">
    <location>
        <begin position="1"/>
        <end position="120"/>
    </location>
</feature>
<name>YACL_ECO5E</name>
<gene>
    <name evidence="1" type="primary">yacL</name>
    <name type="ordered locus">ECH74115_0126</name>
</gene>
<sequence>MDYEFLRDITGVVKVRMSMGHEVVGHWFNEEVKENLALLDEVEQAAHALKGSERSWQRAGHEYTLWMDGEEVMVRANQLEFAGDEMEEGMNYYDEESLSLCGVEDFLQVVAAYRNFVQQK</sequence>
<protein>
    <recommendedName>
        <fullName evidence="1">UPF0231 protein YacL</fullName>
    </recommendedName>
</protein>
<comment type="similarity">
    <text evidence="1">Belongs to the UPF0231 family.</text>
</comment>
<proteinExistence type="inferred from homology"/>
<dbReference type="EMBL" id="CP001164">
    <property type="protein sequence ID" value="ACI35651.1"/>
    <property type="molecule type" value="Genomic_DNA"/>
</dbReference>
<dbReference type="RefSeq" id="WP_000384306.1">
    <property type="nucleotide sequence ID" value="NC_011353.1"/>
</dbReference>
<dbReference type="GeneID" id="93777317"/>
<dbReference type="KEGG" id="ecf:ECH74115_0126"/>
<dbReference type="HOGENOM" id="CLU_139226_0_0_6"/>
<dbReference type="HAMAP" id="MF_01053">
    <property type="entry name" value="UPF0231"/>
    <property type="match status" value="1"/>
</dbReference>
<dbReference type="InterPro" id="IPR008249">
    <property type="entry name" value="UPF0231"/>
</dbReference>
<dbReference type="NCBIfam" id="NF003574">
    <property type="entry name" value="PRK05248.1-1"/>
    <property type="match status" value="1"/>
</dbReference>
<dbReference type="NCBIfam" id="NF003576">
    <property type="entry name" value="PRK05248.1-3"/>
    <property type="match status" value="1"/>
</dbReference>
<dbReference type="Pfam" id="PF06062">
    <property type="entry name" value="UPF0231"/>
    <property type="match status" value="1"/>
</dbReference>
<dbReference type="PIRSF" id="PIRSF006287">
    <property type="entry name" value="UCP006287"/>
    <property type="match status" value="1"/>
</dbReference>
<evidence type="ECO:0000255" key="1">
    <source>
        <dbReference type="HAMAP-Rule" id="MF_01053"/>
    </source>
</evidence>
<organism>
    <name type="scientific">Escherichia coli O157:H7 (strain EC4115 / EHEC)</name>
    <dbReference type="NCBI Taxonomy" id="444450"/>
    <lineage>
        <taxon>Bacteria</taxon>
        <taxon>Pseudomonadati</taxon>
        <taxon>Pseudomonadota</taxon>
        <taxon>Gammaproteobacteria</taxon>
        <taxon>Enterobacterales</taxon>
        <taxon>Enterobacteriaceae</taxon>
        <taxon>Escherichia</taxon>
    </lineage>
</organism>
<reference key="1">
    <citation type="journal article" date="2011" name="Proc. Natl. Acad. Sci. U.S.A.">
        <title>Genomic anatomy of Escherichia coli O157:H7 outbreaks.</title>
        <authorList>
            <person name="Eppinger M."/>
            <person name="Mammel M.K."/>
            <person name="Leclerc J.E."/>
            <person name="Ravel J."/>
            <person name="Cebula T.A."/>
        </authorList>
    </citation>
    <scope>NUCLEOTIDE SEQUENCE [LARGE SCALE GENOMIC DNA]</scope>
    <source>
        <strain>EC4115 / EHEC</strain>
    </source>
</reference>
<accession>B5YZF4</accession>